<reference key="1">
    <citation type="submission" date="2004-08" db="EMBL/GenBank/DDBJ databases">
        <authorList>
            <consortium name="NIH - Xenopus Gene Collection (XGC) project"/>
        </authorList>
    </citation>
    <scope>NUCLEOTIDE SEQUENCE [LARGE SCALE MRNA]</scope>
    <source>
        <tissue>Embryo</tissue>
    </source>
</reference>
<dbReference type="EMBL" id="BC081329">
    <property type="protein sequence ID" value="AAH81329.1"/>
    <property type="molecule type" value="mRNA"/>
</dbReference>
<dbReference type="RefSeq" id="NP_001008124.1">
    <property type="nucleotide sequence ID" value="NM_001008123.1"/>
</dbReference>
<dbReference type="SMR" id="Q66IJ0"/>
<dbReference type="FunCoup" id="Q66IJ0">
    <property type="interactions" value="2755"/>
</dbReference>
<dbReference type="STRING" id="8364.ENSXETP00000046126"/>
<dbReference type="DNASU" id="493486"/>
<dbReference type="GeneID" id="493486"/>
<dbReference type="KEGG" id="xtr:493486"/>
<dbReference type="AGR" id="Xenbase:XB-GENE-980941"/>
<dbReference type="CTD" id="129401"/>
<dbReference type="Xenbase" id="XB-GENE-980941">
    <property type="gene designation" value="nup35"/>
</dbReference>
<dbReference type="InParanoid" id="Q66IJ0"/>
<dbReference type="OrthoDB" id="3365060at2759"/>
<dbReference type="Reactome" id="R-XTR-170822">
    <property type="pathway name" value="Regulation of Glucokinase by Glucokinase Regulatory Protein"/>
</dbReference>
<dbReference type="Reactome" id="R-XTR-3108214">
    <property type="pathway name" value="SUMOylation of DNA damage response and repair proteins"/>
</dbReference>
<dbReference type="Reactome" id="R-XTR-3232142">
    <property type="pathway name" value="SUMOylation of ubiquitinylation proteins"/>
</dbReference>
<dbReference type="Reactome" id="R-XTR-3301854">
    <property type="pathway name" value="Nuclear Pore Complex (NPC) Disassembly"/>
</dbReference>
<dbReference type="Reactome" id="R-XTR-3371453">
    <property type="pathway name" value="Regulation of HSF1-mediated heat shock response"/>
</dbReference>
<dbReference type="Reactome" id="R-XTR-4085377">
    <property type="pathway name" value="SUMOylation of SUMOylation proteins"/>
</dbReference>
<dbReference type="Reactome" id="R-XTR-4570464">
    <property type="pathway name" value="SUMOylation of RNA binding proteins"/>
</dbReference>
<dbReference type="Reactome" id="R-XTR-4615885">
    <property type="pathway name" value="SUMOylation of DNA replication proteins"/>
</dbReference>
<dbReference type="Proteomes" id="UP000008143">
    <property type="component" value="Chromosome 9"/>
</dbReference>
<dbReference type="GO" id="GO:0031965">
    <property type="term" value="C:nuclear membrane"/>
    <property type="evidence" value="ECO:0007669"/>
    <property type="project" value="InterPro"/>
</dbReference>
<dbReference type="GO" id="GO:0005643">
    <property type="term" value="C:nuclear pore"/>
    <property type="evidence" value="ECO:0007669"/>
    <property type="project" value="UniProtKB-SubCell"/>
</dbReference>
<dbReference type="GO" id="GO:0003676">
    <property type="term" value="F:nucleic acid binding"/>
    <property type="evidence" value="ECO:0007669"/>
    <property type="project" value="InterPro"/>
</dbReference>
<dbReference type="GO" id="GO:0017056">
    <property type="term" value="F:structural constituent of nuclear pore"/>
    <property type="evidence" value="ECO:0007669"/>
    <property type="project" value="InterPro"/>
</dbReference>
<dbReference type="GO" id="GO:0051028">
    <property type="term" value="P:mRNA transport"/>
    <property type="evidence" value="ECO:0007669"/>
    <property type="project" value="UniProtKB-KW"/>
</dbReference>
<dbReference type="GO" id="GO:0015031">
    <property type="term" value="P:protein transport"/>
    <property type="evidence" value="ECO:0007669"/>
    <property type="project" value="UniProtKB-KW"/>
</dbReference>
<dbReference type="CDD" id="cd12722">
    <property type="entry name" value="RRM_Nup53"/>
    <property type="match status" value="1"/>
</dbReference>
<dbReference type="FunFam" id="3.30.70.330:FF:000095">
    <property type="entry name" value="Putative Nucleoporin NUP53"/>
    <property type="match status" value="1"/>
</dbReference>
<dbReference type="Gene3D" id="3.30.70.330">
    <property type="match status" value="1"/>
</dbReference>
<dbReference type="InterPro" id="IPR017389">
    <property type="entry name" value="Nucleoporin_NUP53"/>
</dbReference>
<dbReference type="InterPro" id="IPR012677">
    <property type="entry name" value="Nucleotide-bd_a/b_plait_sf"/>
</dbReference>
<dbReference type="InterPro" id="IPR035979">
    <property type="entry name" value="RBD_domain_sf"/>
</dbReference>
<dbReference type="InterPro" id="IPR007846">
    <property type="entry name" value="RRM_NUP35_dom"/>
</dbReference>
<dbReference type="PANTHER" id="PTHR21527">
    <property type="entry name" value="NUCLEOPORIN NUP35"/>
    <property type="match status" value="1"/>
</dbReference>
<dbReference type="PANTHER" id="PTHR21527:SF6">
    <property type="entry name" value="NUCLEOPORIN NUP35"/>
    <property type="match status" value="1"/>
</dbReference>
<dbReference type="Pfam" id="PF05172">
    <property type="entry name" value="RRM_Nup35"/>
    <property type="match status" value="1"/>
</dbReference>
<dbReference type="PIRSF" id="PIRSF038119">
    <property type="entry name" value="Nucleoporin_NUP53"/>
    <property type="match status" value="1"/>
</dbReference>
<dbReference type="SUPFAM" id="SSF54928">
    <property type="entry name" value="RNA-binding domain, RBD"/>
    <property type="match status" value="1"/>
</dbReference>
<dbReference type="PROSITE" id="PS51472">
    <property type="entry name" value="RRM_NUP35"/>
    <property type="match status" value="1"/>
</dbReference>
<gene>
    <name type="primary">nup35</name>
    <name type="synonym">nup53</name>
</gene>
<proteinExistence type="evidence at transcript level"/>
<feature type="chain" id="PRO_0000234298" description="Nucleoporin NUP35">
    <location>
        <begin position="1"/>
        <end position="330"/>
    </location>
</feature>
<feature type="domain" description="RRM Nup35-type" evidence="3">
    <location>
        <begin position="173"/>
        <end position="253"/>
    </location>
</feature>
<feature type="region of interest" description="Disordered" evidence="4">
    <location>
        <begin position="1"/>
        <end position="32"/>
    </location>
</feature>
<feature type="region of interest" description="Disordered" evidence="4">
    <location>
        <begin position="61"/>
        <end position="82"/>
    </location>
</feature>
<feature type="region of interest" description="Disordered" evidence="4">
    <location>
        <begin position="122"/>
        <end position="142"/>
    </location>
</feature>
<evidence type="ECO:0000250" key="1"/>
<evidence type="ECO:0000250" key="2">
    <source>
        <dbReference type="UniProtKB" id="Q8NFH5"/>
    </source>
</evidence>
<evidence type="ECO:0000255" key="3">
    <source>
        <dbReference type="PROSITE-ProRule" id="PRU00804"/>
    </source>
</evidence>
<evidence type="ECO:0000256" key="4">
    <source>
        <dbReference type="SAM" id="MobiDB-lite"/>
    </source>
</evidence>
<evidence type="ECO:0000305" key="5"/>
<comment type="function">
    <text evidence="1">Functions as a component of the nuclear pore complex (NPC). NPC components, collectively referred to as nucleoporins (NUPs), can play the role of both NPC structural components and of docking or interaction partners for transiently associated nuclear transport factors (By similarity).</text>
</comment>
<comment type="subcellular location">
    <subcellularLocation>
        <location evidence="2">Nucleus</location>
        <location evidence="2">Nuclear pore complex</location>
    </subcellularLocation>
</comment>
<comment type="similarity">
    <text evidence="5">Belongs to the Nup35 family.</text>
</comment>
<sequence>MAAFSMEPMGAEPMALGSPTSPKPSAGAQFLPGFLLGDIPTPVTPQQRPSIGVMEMRSPLLSGGSPPQPVVPTHKDKSGAPPVRSIYDDIASPGLGSTPLNPRKTASFSVLHTPLSGVIPSSPECKNISGSRKRPASSVFSPATIGHSRKTTLSPAQMDPFYTQGDALTSDDQLDDTWVTVFGFPQASASYILLQFAQYGNIIKHVMSNNGNWMHIQYQSKLQARKALSKDGRIFGESIMIGVKPCIDKSVMEATEKVSTPTVSSVFTPPVKNIGTPTQSVGTPRAASMRPLAATYKTPASADYQVVADKQAPRKDESIVSKAMEYMFGW</sequence>
<name>NUP35_XENTR</name>
<organism>
    <name type="scientific">Xenopus tropicalis</name>
    <name type="common">Western clawed frog</name>
    <name type="synonym">Silurana tropicalis</name>
    <dbReference type="NCBI Taxonomy" id="8364"/>
    <lineage>
        <taxon>Eukaryota</taxon>
        <taxon>Metazoa</taxon>
        <taxon>Chordata</taxon>
        <taxon>Craniata</taxon>
        <taxon>Vertebrata</taxon>
        <taxon>Euteleostomi</taxon>
        <taxon>Amphibia</taxon>
        <taxon>Batrachia</taxon>
        <taxon>Anura</taxon>
        <taxon>Pipoidea</taxon>
        <taxon>Pipidae</taxon>
        <taxon>Xenopodinae</taxon>
        <taxon>Xenopus</taxon>
        <taxon>Silurana</taxon>
    </lineage>
</organism>
<keyword id="KW-0509">mRNA transport</keyword>
<keyword id="KW-0906">Nuclear pore complex</keyword>
<keyword id="KW-0539">Nucleus</keyword>
<keyword id="KW-0653">Protein transport</keyword>
<keyword id="KW-1185">Reference proteome</keyword>
<keyword id="KW-0811">Translocation</keyword>
<keyword id="KW-0813">Transport</keyword>
<accession>Q66IJ0</accession>
<protein>
    <recommendedName>
        <fullName evidence="2">Nucleoporin NUP35</fullName>
    </recommendedName>
    <alternativeName>
        <fullName>35 kDa nucleoporin</fullName>
    </alternativeName>
    <alternativeName>
        <fullName>Nuclear pore complex protein Nup53</fullName>
    </alternativeName>
    <alternativeName>
        <fullName evidence="2">Nucleoporin NUP53</fullName>
    </alternativeName>
</protein>